<sequence length="153" mass="17655">MNKELRAKTNEELIQLVTQLKGRLLEYRFKLAQGELDKTHIIKETRQTLARVLTILTERDVKVNVNAMVSSFVKEQTKQKEIQESVKKIKQLRVAKLKQNKEKRLANAEKVKAAPKPEQKTKKVKKAPKKTETVKPTTNKNKKNVKAKTKKKG</sequence>
<dbReference type="EMBL" id="AF036708">
    <property type="protein sequence ID" value="AAB95395.1"/>
    <property type="molecule type" value="Genomic_DNA"/>
</dbReference>
<dbReference type="EMBL" id="AE015450">
    <property type="protein sequence ID" value="AAP56409.2"/>
    <property type="molecule type" value="Genomic_DNA"/>
</dbReference>
<dbReference type="RefSeq" id="WP_011113288.1">
    <property type="nucleotide sequence ID" value="NC_004829.2"/>
</dbReference>
<dbReference type="SMR" id="O52340"/>
<dbReference type="GeneID" id="93509877"/>
<dbReference type="KEGG" id="mga:MGA_0723"/>
<dbReference type="PATRIC" id="fig|233150.7.peg.63"/>
<dbReference type="HOGENOM" id="CLU_1711203_0_0_14"/>
<dbReference type="OrthoDB" id="401368at2"/>
<dbReference type="Proteomes" id="UP000001418">
    <property type="component" value="Chromosome"/>
</dbReference>
<dbReference type="GO" id="GO:0022625">
    <property type="term" value="C:cytosolic large ribosomal subunit"/>
    <property type="evidence" value="ECO:0007669"/>
    <property type="project" value="TreeGrafter"/>
</dbReference>
<dbReference type="GO" id="GO:0003735">
    <property type="term" value="F:structural constituent of ribosome"/>
    <property type="evidence" value="ECO:0007669"/>
    <property type="project" value="InterPro"/>
</dbReference>
<dbReference type="GO" id="GO:0006412">
    <property type="term" value="P:translation"/>
    <property type="evidence" value="ECO:0007669"/>
    <property type="project" value="UniProtKB-UniRule"/>
</dbReference>
<dbReference type="CDD" id="cd00427">
    <property type="entry name" value="Ribosomal_L29_HIP"/>
    <property type="match status" value="1"/>
</dbReference>
<dbReference type="Gene3D" id="1.10.287.310">
    <property type="match status" value="1"/>
</dbReference>
<dbReference type="HAMAP" id="MF_00374">
    <property type="entry name" value="Ribosomal_uL29"/>
    <property type="match status" value="1"/>
</dbReference>
<dbReference type="InterPro" id="IPR050063">
    <property type="entry name" value="Ribosomal_protein_uL29"/>
</dbReference>
<dbReference type="InterPro" id="IPR001854">
    <property type="entry name" value="Ribosomal_uL29"/>
</dbReference>
<dbReference type="InterPro" id="IPR018254">
    <property type="entry name" value="Ribosomal_uL29_CS"/>
</dbReference>
<dbReference type="InterPro" id="IPR036049">
    <property type="entry name" value="Ribosomal_uL29_sf"/>
</dbReference>
<dbReference type="NCBIfam" id="TIGR00012">
    <property type="entry name" value="L29"/>
    <property type="match status" value="1"/>
</dbReference>
<dbReference type="PANTHER" id="PTHR10916">
    <property type="entry name" value="60S RIBOSOMAL PROTEIN L35/50S RIBOSOMAL PROTEIN L29"/>
    <property type="match status" value="1"/>
</dbReference>
<dbReference type="PANTHER" id="PTHR10916:SF0">
    <property type="entry name" value="LARGE RIBOSOMAL SUBUNIT PROTEIN UL29C"/>
    <property type="match status" value="1"/>
</dbReference>
<dbReference type="Pfam" id="PF00831">
    <property type="entry name" value="Ribosomal_L29"/>
    <property type="match status" value="1"/>
</dbReference>
<dbReference type="SUPFAM" id="SSF46561">
    <property type="entry name" value="Ribosomal protein L29 (L29p)"/>
    <property type="match status" value="1"/>
</dbReference>
<dbReference type="PROSITE" id="PS00579">
    <property type="entry name" value="RIBOSOMAL_L29"/>
    <property type="match status" value="1"/>
</dbReference>
<reference key="1">
    <citation type="journal article" date="2000" name="Mol. Biol. (Mosk.)">
        <title>Determination and analysis of the nucleotide sequence of a segment of a Mycoplasma gallisepticum strain A5969 chromosome, containing operons S10 and rrn23-5.</title>
        <authorList>
            <person name="Skamrov A.V."/>
            <person name="Gol'dman M.A."/>
            <person name="Feoktistova E.S."/>
            <person name="Bibilashvili R.S."/>
        </authorList>
    </citation>
    <scope>NUCLEOTIDE SEQUENCE [GENOMIC DNA]</scope>
    <source>
        <strain>A5969Var.B</strain>
    </source>
</reference>
<reference key="2">
    <citation type="journal article" date="2003" name="Microbiology">
        <title>The complete genome sequence of the avian pathogen Mycoplasma gallisepticum strain R(low).</title>
        <authorList>
            <person name="Papazisi L."/>
            <person name="Gorton T.S."/>
            <person name="Kutish G."/>
            <person name="Markham P.F."/>
            <person name="Browning G.F."/>
            <person name="Nguyen D.K."/>
            <person name="Swartzell S."/>
            <person name="Madan A."/>
            <person name="Mahairas G."/>
            <person name="Geary S.J."/>
        </authorList>
    </citation>
    <scope>NUCLEOTIDE SEQUENCE [LARGE SCALE GENOMIC DNA]</scope>
    <source>
        <strain>R(low / passage 15 / clone 2)</strain>
    </source>
</reference>
<gene>
    <name evidence="1" type="primary">rpmC</name>
    <name evidence="3" type="synonym">rpl29</name>
    <name type="ordered locus">MYCGA0590</name>
    <name type="ORF">MGA_0723</name>
</gene>
<keyword id="KW-1185">Reference proteome</keyword>
<keyword id="KW-0687">Ribonucleoprotein</keyword>
<keyword id="KW-0689">Ribosomal protein</keyword>
<organism>
    <name type="scientific">Mycoplasmoides gallisepticum (strain R(low / passage 15 / clone 2))</name>
    <name type="common">Mycoplasma gallisepticum</name>
    <dbReference type="NCBI Taxonomy" id="710127"/>
    <lineage>
        <taxon>Bacteria</taxon>
        <taxon>Bacillati</taxon>
        <taxon>Mycoplasmatota</taxon>
        <taxon>Mycoplasmoidales</taxon>
        <taxon>Mycoplasmoidaceae</taxon>
        <taxon>Mycoplasmoides</taxon>
    </lineage>
</organism>
<protein>
    <recommendedName>
        <fullName evidence="1">Large ribosomal subunit protein uL29</fullName>
    </recommendedName>
    <alternativeName>
        <fullName>50S ribosomal protein L29</fullName>
    </alternativeName>
</protein>
<evidence type="ECO:0000255" key="1">
    <source>
        <dbReference type="HAMAP-Rule" id="MF_00374"/>
    </source>
</evidence>
<evidence type="ECO:0000256" key="2">
    <source>
        <dbReference type="SAM" id="MobiDB-lite"/>
    </source>
</evidence>
<evidence type="ECO:0000303" key="3">
    <source>
    </source>
</evidence>
<proteinExistence type="inferred from homology"/>
<comment type="similarity">
    <text evidence="1">Belongs to the universal ribosomal protein uL29 family.</text>
</comment>
<accession>O52340</accession>
<feature type="chain" id="PRO_0000130419" description="Large ribosomal subunit protein uL29">
    <location>
        <begin position="1"/>
        <end position="153"/>
    </location>
</feature>
<feature type="region of interest" description="Large ribosomal subunit protein uL29" evidence="1">
    <location>
        <begin position="1"/>
        <end position="83"/>
    </location>
</feature>
<feature type="region of interest" description="Unknown">
    <location>
        <begin position="84"/>
        <end position="153"/>
    </location>
</feature>
<feature type="region of interest" description="Disordered" evidence="2">
    <location>
        <begin position="100"/>
        <end position="153"/>
    </location>
</feature>
<feature type="compositionally biased region" description="Basic and acidic residues" evidence="2">
    <location>
        <begin position="100"/>
        <end position="121"/>
    </location>
</feature>
<feature type="compositionally biased region" description="Basic residues" evidence="2">
    <location>
        <begin position="140"/>
        <end position="153"/>
    </location>
</feature>
<name>RL29_MYCGA</name>